<reference key="1">
    <citation type="submission" date="2007-06" db="EMBL/GenBank/DDBJ databases">
        <title>Complete sequence of chromosome of Staphylococcus aureus subsp. aureus JH1.</title>
        <authorList>
            <consortium name="US DOE Joint Genome Institute"/>
            <person name="Copeland A."/>
            <person name="Lucas S."/>
            <person name="Lapidus A."/>
            <person name="Barry K."/>
            <person name="Detter J.C."/>
            <person name="Glavina del Rio T."/>
            <person name="Hammon N."/>
            <person name="Israni S."/>
            <person name="Dalin E."/>
            <person name="Tice H."/>
            <person name="Pitluck S."/>
            <person name="Chain P."/>
            <person name="Malfatti S."/>
            <person name="Shin M."/>
            <person name="Vergez L."/>
            <person name="Schmutz J."/>
            <person name="Larimer F."/>
            <person name="Land M."/>
            <person name="Hauser L."/>
            <person name="Kyrpides N."/>
            <person name="Ivanova N."/>
            <person name="Tomasz A."/>
            <person name="Richardson P."/>
        </authorList>
    </citation>
    <scope>NUCLEOTIDE SEQUENCE [LARGE SCALE GENOMIC DNA]</scope>
    <source>
        <strain>JH1</strain>
    </source>
</reference>
<comment type="function">
    <text evidence="1">Catalyzes the reversible isomerization-deamination of glucosamine 6-phosphate (GlcN6P) to form fructose 6-phosphate (Fru6P) and ammonium ion.</text>
</comment>
<comment type="catalytic activity">
    <reaction evidence="1">
        <text>alpha-D-glucosamine 6-phosphate + H2O = beta-D-fructose 6-phosphate + NH4(+)</text>
        <dbReference type="Rhea" id="RHEA:12172"/>
        <dbReference type="ChEBI" id="CHEBI:15377"/>
        <dbReference type="ChEBI" id="CHEBI:28938"/>
        <dbReference type="ChEBI" id="CHEBI:57634"/>
        <dbReference type="ChEBI" id="CHEBI:75989"/>
        <dbReference type="EC" id="3.5.99.6"/>
    </reaction>
</comment>
<comment type="pathway">
    <text evidence="1">Amino-sugar metabolism; N-acetylneuraminate degradation; D-fructose 6-phosphate from N-acetylneuraminate: step 5/5.</text>
</comment>
<comment type="similarity">
    <text evidence="1">Belongs to the glucosamine/galactosamine-6-phosphate isomerase family. NagB subfamily.</text>
</comment>
<name>NAGB_STAA2</name>
<accession>A6TZ46</accession>
<feature type="chain" id="PRO_1000085756" description="Glucosamine-6-phosphate deaminase">
    <location>
        <begin position="1"/>
        <end position="252"/>
    </location>
</feature>
<feature type="active site" description="Proton acceptor; for enolization step" evidence="1">
    <location>
        <position position="67"/>
    </location>
</feature>
<feature type="active site" description="For ring-opening step" evidence="1">
    <location>
        <position position="137"/>
    </location>
</feature>
<feature type="active site" description="Proton acceptor; for ring-opening step" evidence="1">
    <location>
        <position position="139"/>
    </location>
</feature>
<feature type="active site" description="For ring-opening step" evidence="1">
    <location>
        <position position="144"/>
    </location>
</feature>
<proteinExistence type="inferred from homology"/>
<dbReference type="EC" id="3.5.99.6" evidence="1"/>
<dbReference type="EMBL" id="CP000736">
    <property type="protein sequence ID" value="ABR51464.1"/>
    <property type="molecule type" value="Genomic_DNA"/>
</dbReference>
<dbReference type="SMR" id="A6TZ46"/>
<dbReference type="KEGG" id="sah:SaurJH1_0606"/>
<dbReference type="HOGENOM" id="CLU_049611_1_1_9"/>
<dbReference type="UniPathway" id="UPA00629">
    <property type="reaction ID" value="UER00684"/>
</dbReference>
<dbReference type="GO" id="GO:0005737">
    <property type="term" value="C:cytoplasm"/>
    <property type="evidence" value="ECO:0007669"/>
    <property type="project" value="TreeGrafter"/>
</dbReference>
<dbReference type="GO" id="GO:0004342">
    <property type="term" value="F:glucosamine-6-phosphate deaminase activity"/>
    <property type="evidence" value="ECO:0007669"/>
    <property type="project" value="UniProtKB-UniRule"/>
</dbReference>
<dbReference type="GO" id="GO:0042802">
    <property type="term" value="F:identical protein binding"/>
    <property type="evidence" value="ECO:0007669"/>
    <property type="project" value="TreeGrafter"/>
</dbReference>
<dbReference type="GO" id="GO:0005975">
    <property type="term" value="P:carbohydrate metabolic process"/>
    <property type="evidence" value="ECO:0007669"/>
    <property type="project" value="InterPro"/>
</dbReference>
<dbReference type="GO" id="GO:0006043">
    <property type="term" value="P:glucosamine catabolic process"/>
    <property type="evidence" value="ECO:0007669"/>
    <property type="project" value="TreeGrafter"/>
</dbReference>
<dbReference type="GO" id="GO:0006046">
    <property type="term" value="P:N-acetylglucosamine catabolic process"/>
    <property type="evidence" value="ECO:0007669"/>
    <property type="project" value="TreeGrafter"/>
</dbReference>
<dbReference type="GO" id="GO:0019262">
    <property type="term" value="P:N-acetylneuraminate catabolic process"/>
    <property type="evidence" value="ECO:0007669"/>
    <property type="project" value="UniProtKB-UniRule"/>
</dbReference>
<dbReference type="CDD" id="cd01399">
    <property type="entry name" value="GlcN6P_deaminase"/>
    <property type="match status" value="1"/>
</dbReference>
<dbReference type="FunFam" id="3.40.50.1360:FF:000003">
    <property type="entry name" value="Glucosamine-6-phosphate deaminase"/>
    <property type="match status" value="1"/>
</dbReference>
<dbReference type="Gene3D" id="3.40.50.1360">
    <property type="match status" value="1"/>
</dbReference>
<dbReference type="HAMAP" id="MF_01241">
    <property type="entry name" value="GlcN6P_deamin"/>
    <property type="match status" value="1"/>
</dbReference>
<dbReference type="InterPro" id="IPR006148">
    <property type="entry name" value="Glc/Gal-6P_isomerase"/>
</dbReference>
<dbReference type="InterPro" id="IPR004547">
    <property type="entry name" value="Glucosamine6P_isomerase"/>
</dbReference>
<dbReference type="InterPro" id="IPR018321">
    <property type="entry name" value="Glucosamine6P_isomerase_CS"/>
</dbReference>
<dbReference type="InterPro" id="IPR037171">
    <property type="entry name" value="NagB/RpiA_transferase-like"/>
</dbReference>
<dbReference type="NCBIfam" id="TIGR00502">
    <property type="entry name" value="nagB"/>
    <property type="match status" value="1"/>
</dbReference>
<dbReference type="PANTHER" id="PTHR11280">
    <property type="entry name" value="GLUCOSAMINE-6-PHOSPHATE ISOMERASE"/>
    <property type="match status" value="1"/>
</dbReference>
<dbReference type="PANTHER" id="PTHR11280:SF5">
    <property type="entry name" value="GLUCOSAMINE-6-PHOSPHATE ISOMERASE"/>
    <property type="match status" value="1"/>
</dbReference>
<dbReference type="Pfam" id="PF01182">
    <property type="entry name" value="Glucosamine_iso"/>
    <property type="match status" value="1"/>
</dbReference>
<dbReference type="SUPFAM" id="SSF100950">
    <property type="entry name" value="NagB/RpiA/CoA transferase-like"/>
    <property type="match status" value="1"/>
</dbReference>
<dbReference type="PROSITE" id="PS01161">
    <property type="entry name" value="GLC_GALNAC_ISOMERASE"/>
    <property type="match status" value="1"/>
</dbReference>
<keyword id="KW-0119">Carbohydrate metabolism</keyword>
<keyword id="KW-0378">Hydrolase</keyword>
<gene>
    <name evidence="1" type="primary">nagB</name>
    <name type="ordered locus">SaurJH1_0606</name>
</gene>
<protein>
    <recommendedName>
        <fullName evidence="1">Glucosamine-6-phosphate deaminase</fullName>
        <ecNumber evidence="1">3.5.99.6</ecNumber>
    </recommendedName>
    <alternativeName>
        <fullName evidence="1">GlcN6P deaminase</fullName>
        <shortName evidence="1">GNPDA</shortName>
    </alternativeName>
    <alternativeName>
        <fullName evidence="1">Glucosamine-6-phosphate isomerase</fullName>
    </alternativeName>
</protein>
<organism>
    <name type="scientific">Staphylococcus aureus (strain JH1)</name>
    <dbReference type="NCBI Taxonomy" id="359787"/>
    <lineage>
        <taxon>Bacteria</taxon>
        <taxon>Bacillati</taxon>
        <taxon>Bacillota</taxon>
        <taxon>Bacilli</taxon>
        <taxon>Bacillales</taxon>
        <taxon>Staphylococcaceae</taxon>
        <taxon>Staphylococcus</taxon>
    </lineage>
</organism>
<sequence>MKVLNLGSKKQASFYVACELYKEMAFNQHCKLGLATGGTMTDLYEQLVKLLNKNQLNVDNVSTFNLDEYVGLTASHPQSYHYYMDDMLFKQYPYFNRKNIHIPNGDADDMNAEASKYNDVLEQQGQRDIQILGIGENGHIGFNEPGTPFDSVTHIVDLTESTIKANSRYFKNEDDVPKQAISMGLANILQAKRIILLAFGEKKRAAITHLLNQEISVDVPATLLHKHPNVEIYLDDEACPKNVAKIHVDEMD</sequence>
<evidence type="ECO:0000255" key="1">
    <source>
        <dbReference type="HAMAP-Rule" id="MF_01241"/>
    </source>
</evidence>